<organism>
    <name type="scientific">Chromobacterium violaceum (strain ATCC 12472 / DSM 30191 / JCM 1249 / CCUG 213 / NBRC 12614 / NCIMB 9131 / NCTC 9757 / MK)</name>
    <dbReference type="NCBI Taxonomy" id="243365"/>
    <lineage>
        <taxon>Bacteria</taxon>
        <taxon>Pseudomonadati</taxon>
        <taxon>Pseudomonadota</taxon>
        <taxon>Betaproteobacteria</taxon>
        <taxon>Neisseriales</taxon>
        <taxon>Chromobacteriaceae</taxon>
        <taxon>Chromobacterium</taxon>
    </lineage>
</organism>
<sequence>MNLPRGPVMVDIAGFALTEAERARLSHPLVGGVILFRRNFHNIEQLRALTAEIRALRTPHLLIAVDHEGGRVQRFLDGFTRLPPMRVLGEAWDADRDQALKLAETVGYVLAAELSACGIDLSFTPVLDLDWERCAVIGNRAFHRDPEAVSALAEALQQGLGRGGMMSCGKHYPGHGYVEGDSHHLMPQDDRTLAQIEQDDLVPFARLADAGMGAVMPAHVLYPAVDSQPAGFSKVWLTDILRGRIGFDGVIFSDALDMAGAAGAGTYVQRADAALAAGCDMVLVCNQPEEADAMLAALAPPPQPQLAERLERMAGKSRAEDWQRLIATPDFAAAQAAVRQLAMPKDALAGPQVGEAH</sequence>
<keyword id="KW-0131">Cell cycle</keyword>
<keyword id="KW-0132">Cell division</keyword>
<keyword id="KW-0133">Cell shape</keyword>
<keyword id="KW-0961">Cell wall biogenesis/degradation</keyword>
<keyword id="KW-0963">Cytoplasm</keyword>
<keyword id="KW-0326">Glycosidase</keyword>
<keyword id="KW-0378">Hydrolase</keyword>
<keyword id="KW-0573">Peptidoglycan synthesis</keyword>
<keyword id="KW-1185">Reference proteome</keyword>
<gene>
    <name evidence="1" type="primary">nagZ</name>
    <name type="ordered locus">CV_2073</name>
</gene>
<reference key="1">
    <citation type="journal article" date="2003" name="Proc. Natl. Acad. Sci. U.S.A.">
        <title>The complete genome sequence of Chromobacterium violaceum reveals remarkable and exploitable bacterial adaptability.</title>
        <authorList>
            <person name="Vasconcelos A.T.R."/>
            <person name="de Almeida D.F."/>
            <person name="Hungria M."/>
            <person name="Guimaraes C.T."/>
            <person name="Antonio R.V."/>
            <person name="Almeida F.C."/>
            <person name="de Almeida L.G.P."/>
            <person name="de Almeida R."/>
            <person name="Alves-Gomes J.A."/>
            <person name="Andrade E.M."/>
            <person name="Araripe J."/>
            <person name="de Araujo M.F.F."/>
            <person name="Astolfi-Filho S."/>
            <person name="Azevedo V."/>
            <person name="Baptista A.J."/>
            <person name="Bataus L.A.M."/>
            <person name="Batista J.S."/>
            <person name="Belo A."/>
            <person name="van den Berg C."/>
            <person name="Bogo M."/>
            <person name="Bonatto S."/>
            <person name="Bordignon J."/>
            <person name="Brigido M.M."/>
            <person name="Brito C.A."/>
            <person name="Brocchi M."/>
            <person name="Burity H.A."/>
            <person name="Camargo A.A."/>
            <person name="Cardoso D.D.P."/>
            <person name="Carneiro N.P."/>
            <person name="Carraro D.M."/>
            <person name="Carvalho C.M.B."/>
            <person name="Cascardo J.C.M."/>
            <person name="Cavada B.S."/>
            <person name="Chueire L.M.O."/>
            <person name="Creczynski-Pasa T.B."/>
            <person name="Cunha-Junior N.C."/>
            <person name="Fagundes N."/>
            <person name="Falcao C.L."/>
            <person name="Fantinatti F."/>
            <person name="Farias I.P."/>
            <person name="Felipe M.S.S."/>
            <person name="Ferrari L.P."/>
            <person name="Ferro J.A."/>
            <person name="Ferro M.I.T."/>
            <person name="Franco G.R."/>
            <person name="Freitas N.S.A."/>
            <person name="Furlan L.R."/>
            <person name="Gazzinelli R.T."/>
            <person name="Gomes E.A."/>
            <person name="Goncalves P.R."/>
            <person name="Grangeiro T.B."/>
            <person name="Grattapaglia D."/>
            <person name="Grisard E.C."/>
            <person name="Hanna E.S."/>
            <person name="Jardim S.N."/>
            <person name="Laurino J."/>
            <person name="Leoi L.C.T."/>
            <person name="Lima L.F.A."/>
            <person name="Loureiro M.F."/>
            <person name="Lyra M.C.C.P."/>
            <person name="Madeira H.M.F."/>
            <person name="Manfio G.P."/>
            <person name="Maranhao A.Q."/>
            <person name="Martins W.S."/>
            <person name="di Mauro S.M.Z."/>
            <person name="de Medeiros S.R.B."/>
            <person name="Meissner R.V."/>
            <person name="Moreira M.A.M."/>
            <person name="Nascimento F.F."/>
            <person name="Nicolas M.F."/>
            <person name="Oliveira J.G."/>
            <person name="Oliveira S.C."/>
            <person name="Paixao R.F.C."/>
            <person name="Parente J.A."/>
            <person name="Pedrosa F.O."/>
            <person name="Pena S.D.J."/>
            <person name="Pereira J.O."/>
            <person name="Pereira M."/>
            <person name="Pinto L.S.R.C."/>
            <person name="Pinto L.S."/>
            <person name="Porto J.I.R."/>
            <person name="Potrich D.P."/>
            <person name="Ramalho-Neto C.E."/>
            <person name="Reis A.M.M."/>
            <person name="Rigo L.U."/>
            <person name="Rondinelli E."/>
            <person name="Santos E.B.P."/>
            <person name="Santos F.R."/>
            <person name="Schneider M.P.C."/>
            <person name="Seuanez H.N."/>
            <person name="Silva A.M.R."/>
            <person name="da Silva A.L.C."/>
            <person name="Silva D.W."/>
            <person name="Silva R."/>
            <person name="Simoes I.C."/>
            <person name="Simon D."/>
            <person name="Soares C.M.A."/>
            <person name="Soares R.B.A."/>
            <person name="Souza E.M."/>
            <person name="Souza K.R.L."/>
            <person name="Souza R.C."/>
            <person name="Steffens M.B.R."/>
            <person name="Steindel M."/>
            <person name="Teixeira S.R."/>
            <person name="Urmenyi T."/>
            <person name="Vettore A."/>
            <person name="Wassem R."/>
            <person name="Zaha A."/>
            <person name="Simpson A.J.G."/>
        </authorList>
    </citation>
    <scope>NUCLEOTIDE SEQUENCE [LARGE SCALE GENOMIC DNA]</scope>
    <source>
        <strain>ATCC 12472 / DSM 30191 / JCM 1249 / CCUG 213 / NBRC 12614 / NCIMB 9131 / NCTC 9757 / MK</strain>
    </source>
</reference>
<comment type="function">
    <text evidence="1">Plays a role in peptidoglycan recycling by cleaving the terminal beta-1,4-linked N-acetylglucosamine (GlcNAc) from peptide-linked peptidoglycan fragments, giving rise to free GlcNAc, anhydro-N-acetylmuramic acid and anhydro-N-acetylmuramic acid-linked peptides.</text>
</comment>
<comment type="catalytic activity">
    <reaction evidence="1">
        <text>Hydrolysis of terminal non-reducing N-acetyl-D-hexosamine residues in N-acetyl-beta-D-hexosaminides.</text>
        <dbReference type="EC" id="3.2.1.52"/>
    </reaction>
</comment>
<comment type="pathway">
    <text evidence="1">Cell wall biogenesis; peptidoglycan recycling.</text>
</comment>
<comment type="subcellular location">
    <subcellularLocation>
        <location evidence="1">Cytoplasm</location>
    </subcellularLocation>
</comment>
<comment type="similarity">
    <text evidence="1">Belongs to the glycosyl hydrolase 3 family. NagZ subfamily.</text>
</comment>
<evidence type="ECO:0000255" key="1">
    <source>
        <dbReference type="HAMAP-Rule" id="MF_00364"/>
    </source>
</evidence>
<name>NAGZ_CHRVO</name>
<proteinExistence type="inferred from homology"/>
<dbReference type="EC" id="3.2.1.52" evidence="1"/>
<dbReference type="EMBL" id="AE016825">
    <property type="protein sequence ID" value="AAQ59745.2"/>
    <property type="molecule type" value="Genomic_DNA"/>
</dbReference>
<dbReference type="SMR" id="Q7NWB7"/>
<dbReference type="STRING" id="243365.CV_2073"/>
<dbReference type="CAZy" id="GH3">
    <property type="family name" value="Glycoside Hydrolase Family 3"/>
</dbReference>
<dbReference type="KEGG" id="cvi:CV_2073"/>
<dbReference type="eggNOG" id="COG1472">
    <property type="taxonomic scope" value="Bacteria"/>
</dbReference>
<dbReference type="HOGENOM" id="CLU_008392_0_0_4"/>
<dbReference type="UniPathway" id="UPA00544"/>
<dbReference type="Proteomes" id="UP000001424">
    <property type="component" value="Chromosome"/>
</dbReference>
<dbReference type="GO" id="GO:0005737">
    <property type="term" value="C:cytoplasm"/>
    <property type="evidence" value="ECO:0007669"/>
    <property type="project" value="UniProtKB-SubCell"/>
</dbReference>
<dbReference type="GO" id="GO:0004563">
    <property type="term" value="F:beta-N-acetylhexosaminidase activity"/>
    <property type="evidence" value="ECO:0007669"/>
    <property type="project" value="UniProtKB-UniRule"/>
</dbReference>
<dbReference type="GO" id="GO:0005975">
    <property type="term" value="P:carbohydrate metabolic process"/>
    <property type="evidence" value="ECO:0007669"/>
    <property type="project" value="InterPro"/>
</dbReference>
<dbReference type="GO" id="GO:0051301">
    <property type="term" value="P:cell division"/>
    <property type="evidence" value="ECO:0007669"/>
    <property type="project" value="UniProtKB-KW"/>
</dbReference>
<dbReference type="GO" id="GO:0071555">
    <property type="term" value="P:cell wall organization"/>
    <property type="evidence" value="ECO:0007669"/>
    <property type="project" value="UniProtKB-KW"/>
</dbReference>
<dbReference type="GO" id="GO:0009252">
    <property type="term" value="P:peptidoglycan biosynthetic process"/>
    <property type="evidence" value="ECO:0007669"/>
    <property type="project" value="UniProtKB-KW"/>
</dbReference>
<dbReference type="GO" id="GO:0009254">
    <property type="term" value="P:peptidoglycan turnover"/>
    <property type="evidence" value="ECO:0007669"/>
    <property type="project" value="UniProtKB-UniRule"/>
</dbReference>
<dbReference type="GO" id="GO:0008360">
    <property type="term" value="P:regulation of cell shape"/>
    <property type="evidence" value="ECO:0007669"/>
    <property type="project" value="UniProtKB-KW"/>
</dbReference>
<dbReference type="FunFam" id="3.20.20.300:FF:000001">
    <property type="entry name" value="Beta-hexosaminidase"/>
    <property type="match status" value="1"/>
</dbReference>
<dbReference type="Gene3D" id="3.20.20.300">
    <property type="entry name" value="Glycoside hydrolase, family 3, N-terminal domain"/>
    <property type="match status" value="1"/>
</dbReference>
<dbReference type="HAMAP" id="MF_00364">
    <property type="entry name" value="NagZ"/>
    <property type="match status" value="1"/>
</dbReference>
<dbReference type="InterPro" id="IPR022956">
    <property type="entry name" value="Beta_hexosaminidase_bac"/>
</dbReference>
<dbReference type="InterPro" id="IPR019800">
    <property type="entry name" value="Glyco_hydro_3_AS"/>
</dbReference>
<dbReference type="InterPro" id="IPR001764">
    <property type="entry name" value="Glyco_hydro_3_N"/>
</dbReference>
<dbReference type="InterPro" id="IPR036962">
    <property type="entry name" value="Glyco_hydro_3_N_sf"/>
</dbReference>
<dbReference type="InterPro" id="IPR017853">
    <property type="entry name" value="Glycoside_hydrolase_SF"/>
</dbReference>
<dbReference type="InterPro" id="IPR050226">
    <property type="entry name" value="NagZ_Beta-hexosaminidase"/>
</dbReference>
<dbReference type="NCBIfam" id="NF003740">
    <property type="entry name" value="PRK05337.1"/>
    <property type="match status" value="1"/>
</dbReference>
<dbReference type="PANTHER" id="PTHR30480:SF13">
    <property type="entry name" value="BETA-HEXOSAMINIDASE"/>
    <property type="match status" value="1"/>
</dbReference>
<dbReference type="PANTHER" id="PTHR30480">
    <property type="entry name" value="BETA-HEXOSAMINIDASE-RELATED"/>
    <property type="match status" value="1"/>
</dbReference>
<dbReference type="Pfam" id="PF00933">
    <property type="entry name" value="Glyco_hydro_3"/>
    <property type="match status" value="1"/>
</dbReference>
<dbReference type="SUPFAM" id="SSF51445">
    <property type="entry name" value="(Trans)glycosidases"/>
    <property type="match status" value="1"/>
</dbReference>
<dbReference type="PROSITE" id="PS00775">
    <property type="entry name" value="GLYCOSYL_HYDROL_F3"/>
    <property type="match status" value="1"/>
</dbReference>
<feature type="chain" id="PRO_0000210784" description="Beta-hexosaminidase">
    <location>
        <begin position="1"/>
        <end position="357"/>
    </location>
</feature>
<feature type="active site" description="Proton donor/acceptor" evidence="1">
    <location>
        <position position="183"/>
    </location>
</feature>
<feature type="active site" description="Nucleophile" evidence="1">
    <location>
        <position position="254"/>
    </location>
</feature>
<feature type="binding site" evidence="1">
    <location>
        <position position="66"/>
    </location>
    <ligand>
        <name>substrate</name>
    </ligand>
</feature>
<feature type="binding site" evidence="1">
    <location>
        <position position="74"/>
    </location>
    <ligand>
        <name>substrate</name>
    </ligand>
</feature>
<feature type="binding site" evidence="1">
    <location>
        <position position="140"/>
    </location>
    <ligand>
        <name>substrate</name>
    </ligand>
</feature>
<feature type="binding site" evidence="1">
    <location>
        <begin position="170"/>
        <end position="171"/>
    </location>
    <ligand>
        <name>substrate</name>
    </ligand>
</feature>
<feature type="site" description="Important for catalytic activity" evidence="1">
    <location>
        <position position="181"/>
    </location>
</feature>
<accession>Q7NWB7</accession>
<protein>
    <recommendedName>
        <fullName evidence="1">Beta-hexosaminidase</fullName>
        <ecNumber evidence="1">3.2.1.52</ecNumber>
    </recommendedName>
    <alternativeName>
        <fullName evidence="1">Beta-N-acetylhexosaminidase</fullName>
    </alternativeName>
    <alternativeName>
        <fullName evidence="1">N-acetyl-beta-glucosaminidase</fullName>
    </alternativeName>
</protein>